<feature type="signal peptide" evidence="3">
    <location>
        <begin position="1"/>
        <end position="28"/>
    </location>
</feature>
<feature type="chain" id="PRO_0000444568" description="Glycosyl hydrolase 5 family protein">
    <location>
        <begin position="29"/>
        <end position="556"/>
    </location>
</feature>
<feature type="active site" description="Proton donor/acceptor" evidence="1">
    <location>
        <position position="208"/>
    </location>
</feature>
<feature type="active site" description="Nucleophile" evidence="1">
    <location>
        <position position="473"/>
    </location>
</feature>
<feature type="glycosylation site" description="N-linked (GlcNAc...) asparagine" evidence="2">
    <location>
        <position position="102"/>
    </location>
</feature>
<feature type="glycosylation site" description="N-linked (GlcNAc...) asparagine" evidence="2">
    <location>
        <position position="113"/>
    </location>
</feature>
<feature type="glycosylation site" description="N-linked (GlcNAc...) asparagine" evidence="2">
    <location>
        <position position="212"/>
    </location>
</feature>
<feature type="glycosylation site" description="N-linked (GlcNAc...) asparagine" evidence="2">
    <location>
        <position position="290"/>
    </location>
</feature>
<feature type="glycosylation site" description="N-linked (GlcNAc...) asparagine" evidence="2">
    <location>
        <position position="307"/>
    </location>
</feature>
<feature type="glycosylation site" description="N-linked (GlcNAc...) asparagine" evidence="2">
    <location>
        <position position="474"/>
    </location>
</feature>
<feature type="glycosylation site" description="N-linked (GlcNAc...) asparagine" evidence="2">
    <location>
        <position position="479"/>
    </location>
</feature>
<evidence type="ECO:0000250" key="1">
    <source>
        <dbReference type="UniProtKB" id="P07982"/>
    </source>
</evidence>
<evidence type="ECO:0000255" key="2">
    <source>
        <dbReference type="PROSITE-ProRule" id="PRU00498"/>
    </source>
</evidence>
<evidence type="ECO:0000269" key="3">
    <source>
    </source>
</evidence>
<evidence type="ECO:0000269" key="4">
    <source>
    </source>
</evidence>
<evidence type="ECO:0000303" key="5">
    <source>
    </source>
</evidence>
<evidence type="ECO:0000303" key="6">
    <source>
    </source>
</evidence>
<evidence type="ECO:0000305" key="7"/>
<evidence type="ECO:0000305" key="8">
    <source>
    </source>
</evidence>
<name>GH5FP_CHAOB</name>
<sequence length="556" mass="61637">MTSAGVAPTALRLLTALLLLLVAAPSHSLPLLTRGRWIVDEATGLRVKLACVNWVGHLEPGLPEGLNRLPVATVAHTISSLGFNCVRLTYSIHMLTRTSYTNATVAQTFARLNLTEAASGIEHNNPELLDLGHVAAYHHVVAALSEAGVMVILDNHVSKPKWCCAVDDGNGFFGDRYFNPNTWVEGLGLMATYFNNTPNVVAMSLRNELRGNRSTPISWSRHMQWGAATVHKANPKVLVILSGLQFDTDLSFLPVLPVTLPFKEKIVYEGHWYSFGVPWRTGLPNDVCKNETGRFKSNVGFVTSSANATAAPLFMSEFGIDQRYVNDNDNRYLNCILAYLAEEDLDWALWTMGGSYYYRSDKQPVKDFEETYGFFNHDWSRIRNPDFISRLKEIQQPIQDPYLAPGPYYQIIYHPASGLCVESGIGNTVHLGSCQSVRSRWNYDASVKGPIGLMGSSSCISTQGNGLPAIMTENCSAPNNTLWSTVSSAQLQLGTRVLGKDGKEKWMCLDGSKSPLISTNECICITDSHCYPKLNPEKQWFKVITTNKQLLHQLQL</sequence>
<protein>
    <recommendedName>
        <fullName evidence="5">Glycosyl hydrolase 5 family protein</fullName>
        <ecNumber evidence="7">3.2.1.-</ecNumber>
    </recommendedName>
    <allergenName evidence="5">Cha o 3</allergenName>
</protein>
<comment type="function">
    <text evidence="8">May have glycosyl hydrolase activity.</text>
</comment>
<comment type="PTM">
    <text evidence="4">Glycosylated.</text>
</comment>
<comment type="allergen">
    <text evidence="3">Causes an allergic reaction in human. Binds to IgE.</text>
</comment>
<comment type="similarity">
    <text evidence="7">Belongs to the glycosyl hydrolase 5 (cellulase A) family.</text>
</comment>
<keyword id="KW-0020">Allergen</keyword>
<keyword id="KW-0119">Carbohydrate metabolism</keyword>
<keyword id="KW-0903">Direct protein sequencing</keyword>
<keyword id="KW-0325">Glycoprotein</keyword>
<keyword id="KW-0326">Glycosidase</keyword>
<keyword id="KW-0378">Hydrolase</keyword>
<keyword id="KW-0732">Signal</keyword>
<accession>C0HLA0</accession>
<proteinExistence type="evidence at protein level"/>
<dbReference type="EC" id="3.2.1.-" evidence="7"/>
<dbReference type="EMBL" id="HV942721">
    <property type="status" value="NOT_ANNOTATED_CDS"/>
    <property type="molecule type" value="mRNA"/>
</dbReference>
<dbReference type="SMR" id="C0HLA0"/>
<dbReference type="Allergome" id="11866">
    <property type="allergen name" value="Cha o 3"/>
</dbReference>
<dbReference type="Allergome" id="11867">
    <property type="allergen name" value="Cha o 3.0101"/>
</dbReference>
<dbReference type="GO" id="GO:0004553">
    <property type="term" value="F:hydrolase activity, hydrolyzing O-glycosyl compounds"/>
    <property type="evidence" value="ECO:0007669"/>
    <property type="project" value="InterPro"/>
</dbReference>
<dbReference type="GO" id="GO:0000272">
    <property type="term" value="P:polysaccharide catabolic process"/>
    <property type="evidence" value="ECO:0007669"/>
    <property type="project" value="InterPro"/>
</dbReference>
<dbReference type="Gene3D" id="3.20.20.80">
    <property type="entry name" value="Glycosidases"/>
    <property type="match status" value="1"/>
</dbReference>
<dbReference type="InterPro" id="IPR001547">
    <property type="entry name" value="Glyco_hydro_5"/>
</dbReference>
<dbReference type="InterPro" id="IPR017853">
    <property type="entry name" value="Glycoside_hydrolase_SF"/>
</dbReference>
<dbReference type="InterPro" id="IPR035992">
    <property type="entry name" value="Ricin_B-like_lectins"/>
</dbReference>
<dbReference type="PANTHER" id="PTHR31263">
    <property type="entry name" value="CELLULASE FAMILY PROTEIN (AFU_ORTHOLOGUE AFUA_5G14560)"/>
    <property type="match status" value="1"/>
</dbReference>
<dbReference type="PANTHER" id="PTHR31263:SF0">
    <property type="entry name" value="CELLULASE FAMILY PROTEIN (AFU_ORTHOLOGUE AFUA_5G14560)"/>
    <property type="match status" value="1"/>
</dbReference>
<dbReference type="Pfam" id="PF00150">
    <property type="entry name" value="Cellulase"/>
    <property type="match status" value="1"/>
</dbReference>
<dbReference type="SUPFAM" id="SSF51445">
    <property type="entry name" value="(Trans)glycosidases"/>
    <property type="match status" value="1"/>
</dbReference>
<dbReference type="SUPFAM" id="SSF50370">
    <property type="entry name" value="Ricin B-like lectins"/>
    <property type="match status" value="1"/>
</dbReference>
<organism evidence="5">
    <name type="scientific">Chamaecyparis obtusa</name>
    <name type="common">Hinoki false-cypress</name>
    <name type="synonym">Retinospora obtusa</name>
    <dbReference type="NCBI Taxonomy" id="13415"/>
    <lineage>
        <taxon>Eukaryota</taxon>
        <taxon>Viridiplantae</taxon>
        <taxon>Streptophyta</taxon>
        <taxon>Embryophyta</taxon>
        <taxon>Tracheophyta</taxon>
        <taxon>Spermatophyta</taxon>
        <taxon>Pinopsida</taxon>
        <taxon>Pinidae</taxon>
        <taxon>Conifers II</taxon>
        <taxon>Cupressales</taxon>
        <taxon>Cupressaceae</taxon>
        <taxon>Chamaecyparis</taxon>
    </lineage>
</organism>
<reference evidence="7" key="1">
    <citation type="journal article" date="2016" name="J. Allergy Clin. Immunol.">
        <title>Identification and gene cloning of a new major allergen Cha o 3 from Chamaecyparis obtusa (Japanese cypress) pollen.</title>
        <authorList>
            <person name="Osada T."/>
            <person name="Harada T."/>
            <person name="Asaka N."/>
            <person name="Haruma T."/>
            <person name="Kino K."/>
            <person name="Sasaki E."/>
            <person name="Okano M."/>
            <person name="Yamada A."/>
            <person name="Utsugi T."/>
        </authorList>
    </citation>
    <scope>NUCLEOTIDE SEQUENCE [MRNA]</scope>
    <scope>PROTEIN SEQUENCE OF 29-58 AND 514-532</scope>
    <scope>FUNCTION</scope>
    <scope>ALLERGEN</scope>
    <source>
        <tissue evidence="5">Flower</tissue>
        <tissue evidence="5">Pollen</tissue>
    </source>
</reference>
<reference evidence="7" key="2">
    <citation type="journal article" date="2017" name="Carbohydr. Res.">
        <title>Glycoform of a newly identified pollen allergen, Cha o 3, from Chamaecyparis obtusa (Japanese cypress, Hinoki).</title>
        <authorList>
            <person name="Osada T."/>
            <person name="Maeda M."/>
            <person name="Tanabe C."/>
            <person name="Furuta K."/>
            <person name="Vavricka C.J."/>
            <person name="Sasaki E."/>
            <person name="Okano M."/>
            <person name="Kimura Y."/>
        </authorList>
    </citation>
    <scope>GLYCOSYLATION</scope>
    <source>
        <tissue evidence="6">Pollen</tissue>
    </source>
</reference>